<name>SYFA_BRASB</name>
<evidence type="ECO:0000255" key="1">
    <source>
        <dbReference type="HAMAP-Rule" id="MF_00281"/>
    </source>
</evidence>
<reference key="1">
    <citation type="journal article" date="2007" name="Science">
        <title>Legumes symbioses: absence of nod genes in photosynthetic bradyrhizobia.</title>
        <authorList>
            <person name="Giraud E."/>
            <person name="Moulin L."/>
            <person name="Vallenet D."/>
            <person name="Barbe V."/>
            <person name="Cytryn E."/>
            <person name="Avarre J.-C."/>
            <person name="Jaubert M."/>
            <person name="Simon D."/>
            <person name="Cartieaux F."/>
            <person name="Prin Y."/>
            <person name="Bena G."/>
            <person name="Hannibal L."/>
            <person name="Fardoux J."/>
            <person name="Kojadinovic M."/>
            <person name="Vuillet L."/>
            <person name="Lajus A."/>
            <person name="Cruveiller S."/>
            <person name="Rouy Z."/>
            <person name="Mangenot S."/>
            <person name="Segurens B."/>
            <person name="Dossat C."/>
            <person name="Franck W.L."/>
            <person name="Chang W.-S."/>
            <person name="Saunders E."/>
            <person name="Bruce D."/>
            <person name="Richardson P."/>
            <person name="Normand P."/>
            <person name="Dreyfus B."/>
            <person name="Pignol D."/>
            <person name="Stacey G."/>
            <person name="Emerich D."/>
            <person name="Vermeglio A."/>
            <person name="Medigue C."/>
            <person name="Sadowsky M."/>
        </authorList>
    </citation>
    <scope>NUCLEOTIDE SEQUENCE [LARGE SCALE GENOMIC DNA]</scope>
    <source>
        <strain>BTAi1 / ATCC BAA-1182</strain>
    </source>
</reference>
<protein>
    <recommendedName>
        <fullName evidence="1">Phenylalanine--tRNA ligase alpha subunit</fullName>
        <ecNumber evidence="1">6.1.1.20</ecNumber>
    </recommendedName>
    <alternativeName>
        <fullName evidence="1">Phenylalanyl-tRNA synthetase alpha subunit</fullName>
        <shortName evidence="1">PheRS</shortName>
    </alternativeName>
</protein>
<organism>
    <name type="scientific">Bradyrhizobium sp. (strain BTAi1 / ATCC BAA-1182)</name>
    <dbReference type="NCBI Taxonomy" id="288000"/>
    <lineage>
        <taxon>Bacteria</taxon>
        <taxon>Pseudomonadati</taxon>
        <taxon>Pseudomonadota</taxon>
        <taxon>Alphaproteobacteria</taxon>
        <taxon>Hyphomicrobiales</taxon>
        <taxon>Nitrobacteraceae</taxon>
        <taxon>Bradyrhizobium</taxon>
    </lineage>
</organism>
<sequence>MSDLASLETSILDQIAAAGDEAALEAVRVAALGKKGSISALLATLGKMSPDERKTQGAAINLAKDKVTQALAARRDVLKAAALDARLAAETIDVTLPLQDSPAETGRIHPLSQVMDELTTIFADMGFSIAEGPDVETDDYNFTKLNFPEGHPAREMHDTFFFNPKPDGSRMLLRTHTSPVQVRTMLTQKPPIRVICPGRTYRIDSDATHTPQFHQVEGLVIDKGSHLGHLKWILHEFCKAFFEVDHINMKFRPSFFPFTEPSLEVDIQCRRDKGEIRFGEGEDWLEILGCGMVHPNVLRACGIDPDEYQGFAWGMGIDRIAMLKYGMSDLRQLFEGDVRWLSHYGFKPLEVPTLAGGLST</sequence>
<dbReference type="EC" id="6.1.1.20" evidence="1"/>
<dbReference type="EMBL" id="CP000494">
    <property type="protein sequence ID" value="ABQ32511.1"/>
    <property type="molecule type" value="Genomic_DNA"/>
</dbReference>
<dbReference type="RefSeq" id="WP_012040569.1">
    <property type="nucleotide sequence ID" value="NC_009485.1"/>
</dbReference>
<dbReference type="SMR" id="A5E8L7"/>
<dbReference type="STRING" id="288000.BBta_0214"/>
<dbReference type="KEGG" id="bbt:BBta_0214"/>
<dbReference type="eggNOG" id="COG0016">
    <property type="taxonomic scope" value="Bacteria"/>
</dbReference>
<dbReference type="HOGENOM" id="CLU_025086_0_1_5"/>
<dbReference type="OrthoDB" id="9800719at2"/>
<dbReference type="Proteomes" id="UP000000246">
    <property type="component" value="Chromosome"/>
</dbReference>
<dbReference type="GO" id="GO:0005737">
    <property type="term" value="C:cytoplasm"/>
    <property type="evidence" value="ECO:0007669"/>
    <property type="project" value="UniProtKB-SubCell"/>
</dbReference>
<dbReference type="GO" id="GO:0005524">
    <property type="term" value="F:ATP binding"/>
    <property type="evidence" value="ECO:0007669"/>
    <property type="project" value="UniProtKB-UniRule"/>
</dbReference>
<dbReference type="GO" id="GO:0000287">
    <property type="term" value="F:magnesium ion binding"/>
    <property type="evidence" value="ECO:0007669"/>
    <property type="project" value="UniProtKB-UniRule"/>
</dbReference>
<dbReference type="GO" id="GO:0004826">
    <property type="term" value="F:phenylalanine-tRNA ligase activity"/>
    <property type="evidence" value="ECO:0007669"/>
    <property type="project" value="UniProtKB-UniRule"/>
</dbReference>
<dbReference type="GO" id="GO:0000049">
    <property type="term" value="F:tRNA binding"/>
    <property type="evidence" value="ECO:0007669"/>
    <property type="project" value="InterPro"/>
</dbReference>
<dbReference type="GO" id="GO:0006432">
    <property type="term" value="P:phenylalanyl-tRNA aminoacylation"/>
    <property type="evidence" value="ECO:0007669"/>
    <property type="project" value="UniProtKB-UniRule"/>
</dbReference>
<dbReference type="CDD" id="cd00496">
    <property type="entry name" value="PheRS_alpha_core"/>
    <property type="match status" value="1"/>
</dbReference>
<dbReference type="FunFam" id="3.30.930.10:FF:000003">
    <property type="entry name" value="Phenylalanine--tRNA ligase alpha subunit"/>
    <property type="match status" value="1"/>
</dbReference>
<dbReference type="Gene3D" id="3.30.930.10">
    <property type="entry name" value="Bira Bifunctional Protein, Domain 2"/>
    <property type="match status" value="1"/>
</dbReference>
<dbReference type="HAMAP" id="MF_00281">
    <property type="entry name" value="Phe_tRNA_synth_alpha1"/>
    <property type="match status" value="1"/>
</dbReference>
<dbReference type="InterPro" id="IPR006195">
    <property type="entry name" value="aa-tRNA-synth_II"/>
</dbReference>
<dbReference type="InterPro" id="IPR045864">
    <property type="entry name" value="aa-tRNA-synth_II/BPL/LPL"/>
</dbReference>
<dbReference type="InterPro" id="IPR004529">
    <property type="entry name" value="Phe-tRNA-synth_IIc_asu"/>
</dbReference>
<dbReference type="InterPro" id="IPR004188">
    <property type="entry name" value="Phe-tRNA_ligase_II_N"/>
</dbReference>
<dbReference type="InterPro" id="IPR022911">
    <property type="entry name" value="Phe_tRNA_ligase_alpha1_bac"/>
</dbReference>
<dbReference type="InterPro" id="IPR002319">
    <property type="entry name" value="Phenylalanyl-tRNA_Synthase"/>
</dbReference>
<dbReference type="InterPro" id="IPR010978">
    <property type="entry name" value="tRNA-bd_arm"/>
</dbReference>
<dbReference type="NCBIfam" id="TIGR00468">
    <property type="entry name" value="pheS"/>
    <property type="match status" value="1"/>
</dbReference>
<dbReference type="PANTHER" id="PTHR11538:SF41">
    <property type="entry name" value="PHENYLALANINE--TRNA LIGASE, MITOCHONDRIAL"/>
    <property type="match status" value="1"/>
</dbReference>
<dbReference type="PANTHER" id="PTHR11538">
    <property type="entry name" value="PHENYLALANYL-TRNA SYNTHETASE"/>
    <property type="match status" value="1"/>
</dbReference>
<dbReference type="Pfam" id="PF02912">
    <property type="entry name" value="Phe_tRNA-synt_N"/>
    <property type="match status" value="1"/>
</dbReference>
<dbReference type="Pfam" id="PF01409">
    <property type="entry name" value="tRNA-synt_2d"/>
    <property type="match status" value="1"/>
</dbReference>
<dbReference type="SUPFAM" id="SSF55681">
    <property type="entry name" value="Class II aaRS and biotin synthetases"/>
    <property type="match status" value="1"/>
</dbReference>
<dbReference type="SUPFAM" id="SSF46589">
    <property type="entry name" value="tRNA-binding arm"/>
    <property type="match status" value="1"/>
</dbReference>
<dbReference type="PROSITE" id="PS50862">
    <property type="entry name" value="AA_TRNA_LIGASE_II"/>
    <property type="match status" value="1"/>
</dbReference>
<proteinExistence type="inferred from homology"/>
<comment type="catalytic activity">
    <reaction evidence="1">
        <text>tRNA(Phe) + L-phenylalanine + ATP = L-phenylalanyl-tRNA(Phe) + AMP + diphosphate + H(+)</text>
        <dbReference type="Rhea" id="RHEA:19413"/>
        <dbReference type="Rhea" id="RHEA-COMP:9668"/>
        <dbReference type="Rhea" id="RHEA-COMP:9699"/>
        <dbReference type="ChEBI" id="CHEBI:15378"/>
        <dbReference type="ChEBI" id="CHEBI:30616"/>
        <dbReference type="ChEBI" id="CHEBI:33019"/>
        <dbReference type="ChEBI" id="CHEBI:58095"/>
        <dbReference type="ChEBI" id="CHEBI:78442"/>
        <dbReference type="ChEBI" id="CHEBI:78531"/>
        <dbReference type="ChEBI" id="CHEBI:456215"/>
        <dbReference type="EC" id="6.1.1.20"/>
    </reaction>
</comment>
<comment type="cofactor">
    <cofactor evidence="1">
        <name>Mg(2+)</name>
        <dbReference type="ChEBI" id="CHEBI:18420"/>
    </cofactor>
    <text evidence="1">Binds 2 magnesium ions per tetramer.</text>
</comment>
<comment type="subunit">
    <text evidence="1">Tetramer of two alpha and two beta subunits.</text>
</comment>
<comment type="subcellular location">
    <subcellularLocation>
        <location evidence="1">Cytoplasm</location>
    </subcellularLocation>
</comment>
<comment type="similarity">
    <text evidence="1">Belongs to the class-II aminoacyl-tRNA synthetase family. Phe-tRNA synthetase alpha subunit type 1 subfamily.</text>
</comment>
<accession>A5E8L7</accession>
<feature type="chain" id="PRO_1000006802" description="Phenylalanine--tRNA ligase alpha subunit">
    <location>
        <begin position="1"/>
        <end position="360"/>
    </location>
</feature>
<feature type="binding site" evidence="1">
    <location>
        <position position="260"/>
    </location>
    <ligand>
        <name>Mg(2+)</name>
        <dbReference type="ChEBI" id="CHEBI:18420"/>
        <note>shared with beta subunit</note>
    </ligand>
</feature>
<keyword id="KW-0030">Aminoacyl-tRNA synthetase</keyword>
<keyword id="KW-0067">ATP-binding</keyword>
<keyword id="KW-0963">Cytoplasm</keyword>
<keyword id="KW-0436">Ligase</keyword>
<keyword id="KW-0460">Magnesium</keyword>
<keyword id="KW-0479">Metal-binding</keyword>
<keyword id="KW-0547">Nucleotide-binding</keyword>
<keyword id="KW-0648">Protein biosynthesis</keyword>
<keyword id="KW-1185">Reference proteome</keyword>
<gene>
    <name evidence="1" type="primary">pheS</name>
    <name type="ordered locus">BBta_0214</name>
</gene>